<reference key="1">
    <citation type="journal article" date="2002" name="Nucleic Acids Res.">
        <title>Genome sequence of Shigella flexneri 2a: insights into pathogenicity through comparison with genomes of Escherichia coli K12 and O157.</title>
        <authorList>
            <person name="Jin Q."/>
            <person name="Yuan Z."/>
            <person name="Xu J."/>
            <person name="Wang Y."/>
            <person name="Shen Y."/>
            <person name="Lu W."/>
            <person name="Wang J."/>
            <person name="Liu H."/>
            <person name="Yang J."/>
            <person name="Yang F."/>
            <person name="Zhang X."/>
            <person name="Zhang J."/>
            <person name="Yang G."/>
            <person name="Wu H."/>
            <person name="Qu D."/>
            <person name="Dong J."/>
            <person name="Sun L."/>
            <person name="Xue Y."/>
            <person name="Zhao A."/>
            <person name="Gao Y."/>
            <person name="Zhu J."/>
            <person name="Kan B."/>
            <person name="Ding K."/>
            <person name="Chen S."/>
            <person name="Cheng H."/>
            <person name="Yao Z."/>
            <person name="He B."/>
            <person name="Chen R."/>
            <person name="Ma D."/>
            <person name="Qiang B."/>
            <person name="Wen Y."/>
            <person name="Hou Y."/>
            <person name="Yu J."/>
        </authorList>
    </citation>
    <scope>NUCLEOTIDE SEQUENCE [LARGE SCALE GENOMIC DNA]</scope>
    <source>
        <strain>301 / Serotype 2a</strain>
    </source>
</reference>
<reference key="2">
    <citation type="journal article" date="2003" name="Infect. Immun.">
        <title>Complete genome sequence and comparative genomics of Shigella flexneri serotype 2a strain 2457T.</title>
        <authorList>
            <person name="Wei J."/>
            <person name="Goldberg M.B."/>
            <person name="Burland V."/>
            <person name="Venkatesan M.M."/>
            <person name="Deng W."/>
            <person name="Fournier G."/>
            <person name="Mayhew G.F."/>
            <person name="Plunkett G. III"/>
            <person name="Rose D.J."/>
            <person name="Darling A."/>
            <person name="Mau B."/>
            <person name="Perna N.T."/>
            <person name="Payne S.M."/>
            <person name="Runyen-Janecky L.J."/>
            <person name="Zhou S."/>
            <person name="Schwartz D.C."/>
            <person name="Blattner F.R."/>
        </authorList>
    </citation>
    <scope>NUCLEOTIDE SEQUENCE [LARGE SCALE GENOMIC DNA]</scope>
    <source>
        <strain>ATCC 700930 / 2457T / Serotype 2a</strain>
    </source>
</reference>
<proteinExistence type="inferred from homology"/>
<gene>
    <name type="primary">hpcR</name>
    <name type="synonym">hpaR</name>
    <name type="ordered locus">SF4385</name>
    <name type="ordered locus">S4655</name>
</gene>
<accession>P62574</accession>
<accession>Q07095</accession>
<comment type="function">
    <text evidence="1">Repressor for the homoprotocatechuate catabolic pathway hpc operon.</text>
</comment>
<evidence type="ECO:0000250" key="1"/>
<evidence type="ECO:0000255" key="2">
    <source>
        <dbReference type="PROSITE-ProRule" id="PRU00345"/>
    </source>
</evidence>
<name>HPCR_SHIFL</name>
<dbReference type="EMBL" id="AE005674">
    <property type="protein sequence ID" value="AAN45801.1"/>
    <property type="molecule type" value="Genomic_DNA"/>
</dbReference>
<dbReference type="EMBL" id="AE014073">
    <property type="protein sequence ID" value="AAP19579.1"/>
    <property type="molecule type" value="Genomic_DNA"/>
</dbReference>
<dbReference type="RefSeq" id="NP_710094.1">
    <property type="nucleotide sequence ID" value="NC_004337.2"/>
</dbReference>
<dbReference type="RefSeq" id="WP_000543916.1">
    <property type="nucleotide sequence ID" value="NZ_WPGW01000045.1"/>
</dbReference>
<dbReference type="SMR" id="P62574"/>
<dbReference type="STRING" id="198214.SF4385"/>
<dbReference type="PaxDb" id="198214-SF4385"/>
<dbReference type="GeneID" id="1025524"/>
<dbReference type="GeneID" id="75202963"/>
<dbReference type="KEGG" id="sfl:SF4385"/>
<dbReference type="KEGG" id="sfx:S4655"/>
<dbReference type="PATRIC" id="fig|198214.7.peg.5169"/>
<dbReference type="HOGENOM" id="CLU_083287_8_1_6"/>
<dbReference type="Proteomes" id="UP000001006">
    <property type="component" value="Chromosome"/>
</dbReference>
<dbReference type="Proteomes" id="UP000002673">
    <property type="component" value="Chromosome"/>
</dbReference>
<dbReference type="GO" id="GO:0003677">
    <property type="term" value="F:DNA binding"/>
    <property type="evidence" value="ECO:0007669"/>
    <property type="project" value="UniProtKB-KW"/>
</dbReference>
<dbReference type="GO" id="GO:0003700">
    <property type="term" value="F:DNA-binding transcription factor activity"/>
    <property type="evidence" value="ECO:0007669"/>
    <property type="project" value="InterPro"/>
</dbReference>
<dbReference type="GO" id="GO:0045892">
    <property type="term" value="P:negative regulation of DNA-templated transcription"/>
    <property type="evidence" value="ECO:0007669"/>
    <property type="project" value="InterPro"/>
</dbReference>
<dbReference type="GO" id="GO:0006950">
    <property type="term" value="P:response to stress"/>
    <property type="evidence" value="ECO:0007669"/>
    <property type="project" value="TreeGrafter"/>
</dbReference>
<dbReference type="FunFam" id="1.10.10.10:FF:000301">
    <property type="entry name" value="Homoprotocatechuate degradation operon regulator HpaR"/>
    <property type="match status" value="1"/>
</dbReference>
<dbReference type="Gene3D" id="1.10.10.10">
    <property type="entry name" value="Winged helix-like DNA-binding domain superfamily/Winged helix DNA-binding domain"/>
    <property type="match status" value="1"/>
</dbReference>
<dbReference type="InterPro" id="IPR012712">
    <property type="entry name" value="HpaR/FarR"/>
</dbReference>
<dbReference type="InterPro" id="IPR000835">
    <property type="entry name" value="HTH_MarR-typ"/>
</dbReference>
<dbReference type="InterPro" id="IPR039422">
    <property type="entry name" value="MarR/SlyA-like"/>
</dbReference>
<dbReference type="InterPro" id="IPR023187">
    <property type="entry name" value="Tscrpt_reg_MarR-type_CS"/>
</dbReference>
<dbReference type="InterPro" id="IPR036388">
    <property type="entry name" value="WH-like_DNA-bd_sf"/>
</dbReference>
<dbReference type="InterPro" id="IPR036390">
    <property type="entry name" value="WH_DNA-bd_sf"/>
</dbReference>
<dbReference type="NCBIfam" id="TIGR02337">
    <property type="entry name" value="HpaR"/>
    <property type="match status" value="1"/>
</dbReference>
<dbReference type="PANTHER" id="PTHR33164:SF13">
    <property type="entry name" value="4-HYDROXYPHENYLACETATE CATABOLISM PROTEIN"/>
    <property type="match status" value="1"/>
</dbReference>
<dbReference type="PANTHER" id="PTHR33164">
    <property type="entry name" value="TRANSCRIPTIONAL REGULATOR, MARR FAMILY"/>
    <property type="match status" value="1"/>
</dbReference>
<dbReference type="Pfam" id="PF01047">
    <property type="entry name" value="MarR"/>
    <property type="match status" value="1"/>
</dbReference>
<dbReference type="PRINTS" id="PR00598">
    <property type="entry name" value="HTHMARR"/>
</dbReference>
<dbReference type="SMART" id="SM00347">
    <property type="entry name" value="HTH_MARR"/>
    <property type="match status" value="1"/>
</dbReference>
<dbReference type="SUPFAM" id="SSF46785">
    <property type="entry name" value="Winged helix' DNA-binding domain"/>
    <property type="match status" value="1"/>
</dbReference>
<dbReference type="PROSITE" id="PS01117">
    <property type="entry name" value="HTH_MARR_1"/>
    <property type="match status" value="1"/>
</dbReference>
<dbReference type="PROSITE" id="PS50995">
    <property type="entry name" value="HTH_MARR_2"/>
    <property type="match status" value="1"/>
</dbReference>
<feature type="chain" id="PRO_0000054360" description="Homoprotocatechuate degradative operon repressor">
    <location>
        <begin position="1"/>
        <end position="148"/>
    </location>
</feature>
<feature type="domain" description="HTH marR-type" evidence="2">
    <location>
        <begin position="2"/>
        <end position="134"/>
    </location>
</feature>
<organism>
    <name type="scientific">Shigella flexneri</name>
    <dbReference type="NCBI Taxonomy" id="623"/>
    <lineage>
        <taxon>Bacteria</taxon>
        <taxon>Pseudomonadati</taxon>
        <taxon>Pseudomonadota</taxon>
        <taxon>Gammaproteobacteria</taxon>
        <taxon>Enterobacterales</taxon>
        <taxon>Enterobacteriaceae</taxon>
        <taxon>Shigella</taxon>
    </lineage>
</organism>
<sequence length="148" mass="17255">MHDSLTIALLQAREAAMSYFRPIVKRHNLTEQQWRIVRILAESPSMDFHDLAYRACILRPSLTGILTRMERDGLVLRLKPINDQRKLYISLTKEGQALYNRAQTQIEEAYRQIEAQFTAEKMQQLTHLLEEFIALGNSRQEDIPGDNE</sequence>
<protein>
    <recommendedName>
        <fullName>Homoprotocatechuate degradative operon repressor</fullName>
    </recommendedName>
</protein>
<keyword id="KW-0238">DNA-binding</keyword>
<keyword id="KW-1185">Reference proteome</keyword>
<keyword id="KW-0678">Repressor</keyword>
<keyword id="KW-0804">Transcription</keyword>
<keyword id="KW-0805">Transcription regulation</keyword>